<feature type="chain" id="PRO_1000095168" description="Glutamyl-tRNA(Gln) amidotransferase subunit A">
    <location>
        <begin position="1"/>
        <end position="488"/>
    </location>
</feature>
<feature type="active site" description="Charge relay system" evidence="1">
    <location>
        <position position="77"/>
    </location>
</feature>
<feature type="active site" description="Charge relay system" evidence="1">
    <location>
        <position position="152"/>
    </location>
</feature>
<feature type="active site" description="Acyl-ester intermediate" evidence="1">
    <location>
        <position position="176"/>
    </location>
</feature>
<name>GATA_STRP4</name>
<comment type="function">
    <text evidence="1">Allows the formation of correctly charged Gln-tRNA(Gln) through the transamidation of misacylated Glu-tRNA(Gln) in organisms which lack glutaminyl-tRNA synthetase. The reaction takes place in the presence of glutamine and ATP through an activated gamma-phospho-Glu-tRNA(Gln).</text>
</comment>
<comment type="catalytic activity">
    <reaction evidence="1">
        <text>L-glutamyl-tRNA(Gln) + L-glutamine + ATP + H2O = L-glutaminyl-tRNA(Gln) + L-glutamate + ADP + phosphate + H(+)</text>
        <dbReference type="Rhea" id="RHEA:17521"/>
        <dbReference type="Rhea" id="RHEA-COMP:9681"/>
        <dbReference type="Rhea" id="RHEA-COMP:9684"/>
        <dbReference type="ChEBI" id="CHEBI:15377"/>
        <dbReference type="ChEBI" id="CHEBI:15378"/>
        <dbReference type="ChEBI" id="CHEBI:29985"/>
        <dbReference type="ChEBI" id="CHEBI:30616"/>
        <dbReference type="ChEBI" id="CHEBI:43474"/>
        <dbReference type="ChEBI" id="CHEBI:58359"/>
        <dbReference type="ChEBI" id="CHEBI:78520"/>
        <dbReference type="ChEBI" id="CHEBI:78521"/>
        <dbReference type="ChEBI" id="CHEBI:456216"/>
        <dbReference type="EC" id="6.3.5.7"/>
    </reaction>
</comment>
<comment type="subunit">
    <text evidence="1">Heterotrimer of A, B and C subunits.</text>
</comment>
<comment type="similarity">
    <text evidence="1">Belongs to the amidase family. GatA subfamily.</text>
</comment>
<accession>B5E1P7</accession>
<evidence type="ECO:0000255" key="1">
    <source>
        <dbReference type="HAMAP-Rule" id="MF_00120"/>
    </source>
</evidence>
<dbReference type="EC" id="6.3.5.7" evidence="1"/>
<dbReference type="EMBL" id="CP001015">
    <property type="protein sequence ID" value="ACF55261.1"/>
    <property type="molecule type" value="Genomic_DNA"/>
</dbReference>
<dbReference type="SMR" id="B5E1P7"/>
<dbReference type="KEGG" id="spx:SPG_0400"/>
<dbReference type="HOGENOM" id="CLU_009600_0_3_9"/>
<dbReference type="GO" id="GO:0030956">
    <property type="term" value="C:glutamyl-tRNA(Gln) amidotransferase complex"/>
    <property type="evidence" value="ECO:0007669"/>
    <property type="project" value="InterPro"/>
</dbReference>
<dbReference type="GO" id="GO:0005524">
    <property type="term" value="F:ATP binding"/>
    <property type="evidence" value="ECO:0007669"/>
    <property type="project" value="UniProtKB-KW"/>
</dbReference>
<dbReference type="GO" id="GO:0050567">
    <property type="term" value="F:glutaminyl-tRNA synthase (glutamine-hydrolyzing) activity"/>
    <property type="evidence" value="ECO:0007669"/>
    <property type="project" value="UniProtKB-UniRule"/>
</dbReference>
<dbReference type="GO" id="GO:0006412">
    <property type="term" value="P:translation"/>
    <property type="evidence" value="ECO:0007669"/>
    <property type="project" value="UniProtKB-UniRule"/>
</dbReference>
<dbReference type="Gene3D" id="3.90.1300.10">
    <property type="entry name" value="Amidase signature (AS) domain"/>
    <property type="match status" value="1"/>
</dbReference>
<dbReference type="HAMAP" id="MF_00120">
    <property type="entry name" value="GatA"/>
    <property type="match status" value="1"/>
</dbReference>
<dbReference type="InterPro" id="IPR000120">
    <property type="entry name" value="Amidase"/>
</dbReference>
<dbReference type="InterPro" id="IPR020556">
    <property type="entry name" value="Amidase_CS"/>
</dbReference>
<dbReference type="InterPro" id="IPR023631">
    <property type="entry name" value="Amidase_dom"/>
</dbReference>
<dbReference type="InterPro" id="IPR036928">
    <property type="entry name" value="AS_sf"/>
</dbReference>
<dbReference type="InterPro" id="IPR004412">
    <property type="entry name" value="GatA"/>
</dbReference>
<dbReference type="NCBIfam" id="TIGR00132">
    <property type="entry name" value="gatA"/>
    <property type="match status" value="1"/>
</dbReference>
<dbReference type="PANTHER" id="PTHR11895:SF151">
    <property type="entry name" value="GLUTAMYL-TRNA(GLN) AMIDOTRANSFERASE SUBUNIT A"/>
    <property type="match status" value="1"/>
</dbReference>
<dbReference type="PANTHER" id="PTHR11895">
    <property type="entry name" value="TRANSAMIDASE"/>
    <property type="match status" value="1"/>
</dbReference>
<dbReference type="Pfam" id="PF01425">
    <property type="entry name" value="Amidase"/>
    <property type="match status" value="1"/>
</dbReference>
<dbReference type="SUPFAM" id="SSF75304">
    <property type="entry name" value="Amidase signature (AS) enzymes"/>
    <property type="match status" value="1"/>
</dbReference>
<dbReference type="PROSITE" id="PS00571">
    <property type="entry name" value="AMIDASES"/>
    <property type="match status" value="1"/>
</dbReference>
<reference key="1">
    <citation type="journal article" date="2001" name="Microb. Drug Resist.">
        <title>Annotated draft genomic sequence from a Streptococcus pneumoniae type 19F clinical isolate.</title>
        <authorList>
            <person name="Dopazo J."/>
            <person name="Mendoza A."/>
            <person name="Herrero J."/>
            <person name="Caldara F."/>
            <person name="Humbert Y."/>
            <person name="Friedli L."/>
            <person name="Guerrier M."/>
            <person name="Grand-Schenk E."/>
            <person name="Gandin C."/>
            <person name="de Francesco M."/>
            <person name="Polissi A."/>
            <person name="Buell G."/>
            <person name="Feger G."/>
            <person name="Garcia E."/>
            <person name="Peitsch M."/>
            <person name="Garcia-Bustos J.F."/>
        </authorList>
    </citation>
    <scope>NUCLEOTIDE SEQUENCE [LARGE SCALE GENOMIC DNA]</scope>
    <source>
        <strain>G54</strain>
    </source>
</reference>
<reference key="2">
    <citation type="submission" date="2008-03" db="EMBL/GenBank/DDBJ databases">
        <title>Pneumococcal beta glucoside metabolism investigated by whole genome comparison.</title>
        <authorList>
            <person name="Mulas L."/>
            <person name="Trappetti C."/>
            <person name="Hakenbeck R."/>
            <person name="Iannelli F."/>
            <person name="Pozzi G."/>
            <person name="Davidsen T.M."/>
            <person name="Tettelin H."/>
            <person name="Oggioni M."/>
        </authorList>
    </citation>
    <scope>NUCLEOTIDE SEQUENCE [LARGE SCALE GENOMIC DNA]</scope>
    <source>
        <strain>G54</strain>
    </source>
</reference>
<protein>
    <recommendedName>
        <fullName evidence="1">Glutamyl-tRNA(Gln) amidotransferase subunit A</fullName>
        <shortName evidence="1">Glu-ADT subunit A</shortName>
        <ecNumber evidence="1">6.3.5.7</ecNumber>
    </recommendedName>
</protein>
<sequence length="488" mass="52060">MTFNNKTIEELHNLLVSKEISATELTQATLENIKSREEALNSFVTIAEEQALVQAKAIDEAGIDADNVLSGIPLAVKDNISTDGILTTAASKMLYNYEPIFDATAVANAKTKGMIVVGKTNMDEFAMGGSGETSHYGATKNAWDHSKVPGGSSSGSAAAVASGQVRLSLGSDTGGSIRQPAAFNGIVGLKPTYGTVSRFGLIAFGSSLDQIGPFAPTVKENALLLNAIASEDAKDSTSAPVRIADFTSKIGQDIKGMKIALPKEYLGEGINPEVKETILNAAKHFEKLGAIVEEVSLPHSKYGVAVYYIIASSEASSNLQRFDGIRYGYRAEDATNLDEIYVNSRSQGFGEEVKRRIMLGTFSLSSGYYDAYYKKAGQVRTLIIQDFEKVFADYDLILGPTAPSVAYDLDSLNHDPVAMYLADLLTIPVNLAGLPGISIPAGFSQGLPVGLQLIGPKYSEETIYQAAAAFEATTDYHKQQPVIFGGDN</sequence>
<proteinExistence type="inferred from homology"/>
<organism>
    <name type="scientific">Streptococcus pneumoniae serotype 19F (strain G54)</name>
    <dbReference type="NCBI Taxonomy" id="512566"/>
    <lineage>
        <taxon>Bacteria</taxon>
        <taxon>Bacillati</taxon>
        <taxon>Bacillota</taxon>
        <taxon>Bacilli</taxon>
        <taxon>Lactobacillales</taxon>
        <taxon>Streptococcaceae</taxon>
        <taxon>Streptococcus</taxon>
    </lineage>
</organism>
<keyword id="KW-0067">ATP-binding</keyword>
<keyword id="KW-0436">Ligase</keyword>
<keyword id="KW-0547">Nucleotide-binding</keyword>
<keyword id="KW-0648">Protein biosynthesis</keyword>
<gene>
    <name evidence="1" type="primary">gatA</name>
    <name type="ordered locus">SPG_0400</name>
</gene>